<name>GALE_STRLI</name>
<keyword id="KW-0119">Carbohydrate metabolism</keyword>
<keyword id="KW-0299">Galactose metabolism</keyword>
<keyword id="KW-0413">Isomerase</keyword>
<keyword id="KW-0520">NAD</keyword>
<comment type="function">
    <text evidence="1">Involved in the metabolism of galactose. Catalyzes the conversion of UDP-galactose (UDP-Gal) to UDP-glucose (UDP-Glc) through a mechanism involving the transient reduction of NAD (By similarity).</text>
</comment>
<comment type="catalytic activity">
    <reaction>
        <text>UDP-alpha-D-glucose = UDP-alpha-D-galactose</text>
        <dbReference type="Rhea" id="RHEA:22168"/>
        <dbReference type="ChEBI" id="CHEBI:58885"/>
        <dbReference type="ChEBI" id="CHEBI:66914"/>
        <dbReference type="EC" id="5.1.3.2"/>
    </reaction>
</comment>
<comment type="cofactor">
    <cofactor evidence="1">
        <name>NAD(+)</name>
        <dbReference type="ChEBI" id="CHEBI:57540"/>
    </cofactor>
</comment>
<comment type="pathway">
    <text>Carbohydrate metabolism; galactose metabolism.</text>
</comment>
<comment type="subunit">
    <text evidence="1">Homodimer.</text>
</comment>
<comment type="similarity">
    <text evidence="2">Belongs to the NAD(P)-dependent epimerase/dehydratase family.</text>
</comment>
<comment type="sequence caution" evidence="2">
    <conflict type="frameshift">
        <sequence resource="EMBL-CDS" id="AAA26747"/>
    </conflict>
</comment>
<gene>
    <name type="primary">galE</name>
</gene>
<evidence type="ECO:0000250" key="1"/>
<evidence type="ECO:0000305" key="2"/>
<organism>
    <name type="scientific">Streptomyces lividans</name>
    <dbReference type="NCBI Taxonomy" id="1916"/>
    <lineage>
        <taxon>Bacteria</taxon>
        <taxon>Bacillati</taxon>
        <taxon>Actinomycetota</taxon>
        <taxon>Actinomycetes</taxon>
        <taxon>Kitasatosporales</taxon>
        <taxon>Streptomycetaceae</taxon>
        <taxon>Streptomyces</taxon>
    </lineage>
</organism>
<accession>P13226</accession>
<feature type="chain" id="PRO_0000183219" description="UDP-glucose 4-epimerase">
    <location>
        <begin position="1"/>
        <end position="329"/>
    </location>
</feature>
<feature type="active site" description="Proton acceptor" evidence="1">
    <location>
        <position position="144"/>
    </location>
</feature>
<feature type="binding site" evidence="1">
    <location>
        <begin position="13"/>
        <end position="14"/>
    </location>
    <ligand>
        <name>NAD(+)</name>
        <dbReference type="ChEBI" id="CHEBI:57540"/>
    </ligand>
</feature>
<feature type="binding site" evidence="1">
    <location>
        <begin position="33"/>
        <end position="38"/>
    </location>
    <ligand>
        <name>NAD(+)</name>
        <dbReference type="ChEBI" id="CHEBI:57540"/>
    </ligand>
</feature>
<feature type="binding site" evidence="1">
    <location>
        <begin position="53"/>
        <end position="54"/>
    </location>
    <ligand>
        <name>NAD(+)</name>
        <dbReference type="ChEBI" id="CHEBI:57540"/>
    </ligand>
</feature>
<feature type="binding site" evidence="1">
    <location>
        <begin position="76"/>
        <end position="80"/>
    </location>
    <ligand>
        <name>NAD(+)</name>
        <dbReference type="ChEBI" id="CHEBI:57540"/>
    </ligand>
</feature>
<feature type="binding site" evidence="1">
    <location>
        <position position="95"/>
    </location>
    <ligand>
        <name>NAD(+)</name>
        <dbReference type="ChEBI" id="CHEBI:57540"/>
    </ligand>
</feature>
<feature type="binding site" evidence="1">
    <location>
        <position position="120"/>
    </location>
    <ligand>
        <name>NAD(+)</name>
        <dbReference type="ChEBI" id="CHEBI:57540"/>
    </ligand>
</feature>
<feature type="binding site" evidence="1">
    <location>
        <position position="120"/>
    </location>
    <ligand>
        <name>substrate</name>
    </ligand>
</feature>
<feature type="binding site" evidence="1">
    <location>
        <position position="144"/>
    </location>
    <ligand>
        <name>NAD(+)</name>
        <dbReference type="ChEBI" id="CHEBI:57540"/>
    </ligand>
</feature>
<feature type="binding site" evidence="1">
    <location>
        <position position="144"/>
    </location>
    <ligand>
        <name>substrate</name>
    </ligand>
</feature>
<feature type="binding site" evidence="1">
    <location>
        <position position="148"/>
    </location>
    <ligand>
        <name>NAD(+)</name>
        <dbReference type="ChEBI" id="CHEBI:57540"/>
    </ligand>
</feature>
<feature type="binding site" evidence="1">
    <location>
        <position position="172"/>
    </location>
    <ligand>
        <name>NAD(+)</name>
        <dbReference type="ChEBI" id="CHEBI:57540"/>
    </ligand>
</feature>
<feature type="binding site" evidence="1">
    <location>
        <position position="173"/>
    </location>
    <ligand>
        <name>substrate</name>
    </ligand>
</feature>
<feature type="binding site" evidence="1">
    <location>
        <begin position="190"/>
        <end position="191"/>
    </location>
    <ligand>
        <name>substrate</name>
    </ligand>
</feature>
<feature type="binding site" evidence="1">
    <location>
        <begin position="207"/>
        <end position="209"/>
    </location>
    <ligand>
        <name>substrate</name>
    </ligand>
</feature>
<feature type="binding site" evidence="1">
    <location>
        <position position="221"/>
    </location>
    <ligand>
        <name>substrate</name>
    </ligand>
</feature>
<feature type="binding site" evidence="1">
    <location>
        <begin position="281"/>
        <end position="284"/>
    </location>
    <ligand>
        <name>substrate</name>
    </ligand>
</feature>
<protein>
    <recommendedName>
        <fullName>UDP-glucose 4-epimerase</fullName>
        <ecNumber>5.1.3.2</ecNumber>
    </recommendedName>
    <alternativeName>
        <fullName>Galactowaldenase</fullName>
    </alternativeName>
    <alternativeName>
        <fullName>UDP-galactose 4-epimerase</fullName>
    </alternativeName>
</protein>
<sequence length="329" mass="35453">MSGKYLVTGGAGYVGSVVAQHLVEAGNEVVVLHNLSTGFRAGVPAGASFYRGDIRDQDFMRKVFRGRLSFDGVLHFAAFSQVGESVVKPEKYWDNNVGGTMALLEAMRGAGVRRLVFSSTAATYGEPEQVPIVESAPTRPTNPYGASKLAVDHMITGEAAAHGLGAVSVPYFNVAGANRGVRLVHDPESHLIPLVLQVAQGRREAISVYGDDYPTPDTCVRDYIHVADLAEAHLLAVRRRPGNEHLICNLGNGNGFSVREVVETVRRVTGHPIPEIMAPRRGRDPAVLVASAGTAREKLGWNPSRADLAIVSDAWEWHSSHPKGYDDRG</sequence>
<proteinExistence type="inferred from homology"/>
<dbReference type="EC" id="5.1.3.2"/>
<dbReference type="EMBL" id="M18953">
    <property type="protein sequence ID" value="AAA26747.1"/>
    <property type="status" value="ALT_FRAME"/>
    <property type="molecule type" value="Genomic_DNA"/>
</dbReference>
<dbReference type="PIR" id="B28669">
    <property type="entry name" value="XUSMUG"/>
</dbReference>
<dbReference type="SMR" id="P13226"/>
<dbReference type="UniPathway" id="UPA00214"/>
<dbReference type="GO" id="GO:0003978">
    <property type="term" value="F:UDP-glucose 4-epimerase activity"/>
    <property type="evidence" value="ECO:0007669"/>
    <property type="project" value="UniProtKB-EC"/>
</dbReference>
<dbReference type="GO" id="GO:0033499">
    <property type="term" value="P:galactose catabolic process via UDP-galactose, Leloir pathway"/>
    <property type="evidence" value="ECO:0007669"/>
    <property type="project" value="TreeGrafter"/>
</dbReference>
<dbReference type="CDD" id="cd05247">
    <property type="entry name" value="UDP_G4E_1_SDR_e"/>
    <property type="match status" value="1"/>
</dbReference>
<dbReference type="Gene3D" id="3.40.50.720">
    <property type="entry name" value="NAD(P)-binding Rossmann-like Domain"/>
    <property type="match status" value="1"/>
</dbReference>
<dbReference type="Gene3D" id="3.90.25.10">
    <property type="entry name" value="UDP-galactose 4-epimerase, domain 1"/>
    <property type="match status" value="1"/>
</dbReference>
<dbReference type="InterPro" id="IPR001509">
    <property type="entry name" value="Epimerase_deHydtase"/>
</dbReference>
<dbReference type="InterPro" id="IPR036291">
    <property type="entry name" value="NAD(P)-bd_dom_sf"/>
</dbReference>
<dbReference type="InterPro" id="IPR005886">
    <property type="entry name" value="UDP_G4E"/>
</dbReference>
<dbReference type="NCBIfam" id="TIGR01179">
    <property type="entry name" value="galE"/>
    <property type="match status" value="1"/>
</dbReference>
<dbReference type="PANTHER" id="PTHR43725:SF53">
    <property type="entry name" value="UDP-ARABINOSE 4-EPIMERASE 1"/>
    <property type="match status" value="1"/>
</dbReference>
<dbReference type="PANTHER" id="PTHR43725">
    <property type="entry name" value="UDP-GLUCOSE 4-EPIMERASE"/>
    <property type="match status" value="1"/>
</dbReference>
<dbReference type="Pfam" id="PF01370">
    <property type="entry name" value="Epimerase"/>
    <property type="match status" value="1"/>
</dbReference>
<dbReference type="SUPFAM" id="SSF51735">
    <property type="entry name" value="NAD(P)-binding Rossmann-fold domains"/>
    <property type="match status" value="1"/>
</dbReference>
<reference key="1">
    <citation type="journal article" date="1988" name="J. Bacteriol.">
        <title>Gene organization and structure of the Streptomyces lividans gal operon.</title>
        <authorList>
            <person name="Adams C.W."/>
            <person name="Fornwald J.A."/>
            <person name="Schmidt F.J."/>
            <person name="Rosenberg M."/>
            <person name="Brawner M.E."/>
        </authorList>
    </citation>
    <scope>NUCLEOTIDE SEQUENCE [GENOMIC DNA]</scope>
</reference>